<proteinExistence type="inferred from homology"/>
<gene>
    <name evidence="1" type="primary">hemH</name>
    <name type="ordered locus">Noc_1545</name>
</gene>
<keyword id="KW-0963">Cytoplasm</keyword>
<keyword id="KW-0350">Heme biosynthesis</keyword>
<keyword id="KW-0408">Iron</keyword>
<keyword id="KW-0456">Lyase</keyword>
<keyword id="KW-0479">Metal-binding</keyword>
<keyword id="KW-0627">Porphyrin biosynthesis</keyword>
<keyword id="KW-1185">Reference proteome</keyword>
<dbReference type="EC" id="4.98.1.1" evidence="1"/>
<dbReference type="EMBL" id="CP000127">
    <property type="protein sequence ID" value="ABA58029.1"/>
    <property type="molecule type" value="Genomic_DNA"/>
</dbReference>
<dbReference type="RefSeq" id="WP_002809532.1">
    <property type="nucleotide sequence ID" value="NC_007484.1"/>
</dbReference>
<dbReference type="SMR" id="Q3JAW7"/>
<dbReference type="FunCoup" id="Q3JAW7">
    <property type="interactions" value="441"/>
</dbReference>
<dbReference type="STRING" id="323261.Noc_1545"/>
<dbReference type="KEGG" id="noc:Noc_1545"/>
<dbReference type="eggNOG" id="COG0276">
    <property type="taxonomic scope" value="Bacteria"/>
</dbReference>
<dbReference type="HOGENOM" id="CLU_018884_0_0_6"/>
<dbReference type="InParanoid" id="Q3JAW7"/>
<dbReference type="UniPathway" id="UPA00252">
    <property type="reaction ID" value="UER00325"/>
</dbReference>
<dbReference type="Proteomes" id="UP000006838">
    <property type="component" value="Chromosome"/>
</dbReference>
<dbReference type="GO" id="GO:0005737">
    <property type="term" value="C:cytoplasm"/>
    <property type="evidence" value="ECO:0007669"/>
    <property type="project" value="UniProtKB-SubCell"/>
</dbReference>
<dbReference type="GO" id="GO:0004325">
    <property type="term" value="F:ferrochelatase activity"/>
    <property type="evidence" value="ECO:0007669"/>
    <property type="project" value="UniProtKB-UniRule"/>
</dbReference>
<dbReference type="GO" id="GO:0046872">
    <property type="term" value="F:metal ion binding"/>
    <property type="evidence" value="ECO:0007669"/>
    <property type="project" value="UniProtKB-KW"/>
</dbReference>
<dbReference type="GO" id="GO:0006783">
    <property type="term" value="P:heme biosynthetic process"/>
    <property type="evidence" value="ECO:0007669"/>
    <property type="project" value="UniProtKB-UniRule"/>
</dbReference>
<dbReference type="CDD" id="cd00419">
    <property type="entry name" value="Ferrochelatase_C"/>
    <property type="match status" value="1"/>
</dbReference>
<dbReference type="CDD" id="cd03411">
    <property type="entry name" value="Ferrochelatase_N"/>
    <property type="match status" value="1"/>
</dbReference>
<dbReference type="FunFam" id="3.40.50.1400:FF:000002">
    <property type="entry name" value="Ferrochelatase"/>
    <property type="match status" value="1"/>
</dbReference>
<dbReference type="Gene3D" id="3.40.50.1400">
    <property type="match status" value="2"/>
</dbReference>
<dbReference type="HAMAP" id="MF_00323">
    <property type="entry name" value="Ferrochelatase"/>
    <property type="match status" value="1"/>
</dbReference>
<dbReference type="InterPro" id="IPR001015">
    <property type="entry name" value="Ferrochelatase"/>
</dbReference>
<dbReference type="InterPro" id="IPR019772">
    <property type="entry name" value="Ferrochelatase_AS"/>
</dbReference>
<dbReference type="InterPro" id="IPR033644">
    <property type="entry name" value="Ferrochelatase_C"/>
</dbReference>
<dbReference type="InterPro" id="IPR033659">
    <property type="entry name" value="Ferrochelatase_N"/>
</dbReference>
<dbReference type="NCBIfam" id="TIGR00109">
    <property type="entry name" value="hemH"/>
    <property type="match status" value="1"/>
</dbReference>
<dbReference type="PANTHER" id="PTHR11108">
    <property type="entry name" value="FERROCHELATASE"/>
    <property type="match status" value="1"/>
</dbReference>
<dbReference type="PANTHER" id="PTHR11108:SF1">
    <property type="entry name" value="FERROCHELATASE, MITOCHONDRIAL"/>
    <property type="match status" value="1"/>
</dbReference>
<dbReference type="Pfam" id="PF00762">
    <property type="entry name" value="Ferrochelatase"/>
    <property type="match status" value="1"/>
</dbReference>
<dbReference type="SUPFAM" id="SSF53800">
    <property type="entry name" value="Chelatase"/>
    <property type="match status" value="1"/>
</dbReference>
<dbReference type="PROSITE" id="PS00534">
    <property type="entry name" value="FERROCHELATASE"/>
    <property type="match status" value="1"/>
</dbReference>
<comment type="function">
    <text evidence="1">Catalyzes the ferrous insertion into protoporphyrin IX.</text>
</comment>
<comment type="catalytic activity">
    <reaction evidence="1">
        <text>heme b + 2 H(+) = protoporphyrin IX + Fe(2+)</text>
        <dbReference type="Rhea" id="RHEA:22584"/>
        <dbReference type="ChEBI" id="CHEBI:15378"/>
        <dbReference type="ChEBI" id="CHEBI:29033"/>
        <dbReference type="ChEBI" id="CHEBI:57306"/>
        <dbReference type="ChEBI" id="CHEBI:60344"/>
        <dbReference type="EC" id="4.98.1.1"/>
    </reaction>
</comment>
<comment type="pathway">
    <text evidence="1">Porphyrin-containing compound metabolism; protoheme biosynthesis; protoheme from protoporphyrin-IX: step 1/1.</text>
</comment>
<comment type="subcellular location">
    <subcellularLocation>
        <location evidence="1">Cytoplasm</location>
    </subcellularLocation>
</comment>
<comment type="similarity">
    <text evidence="1">Belongs to the ferrochelatase family.</text>
</comment>
<accession>Q3JAW7</accession>
<evidence type="ECO:0000255" key="1">
    <source>
        <dbReference type="HAMAP-Rule" id="MF_00323"/>
    </source>
</evidence>
<evidence type="ECO:0000256" key="2">
    <source>
        <dbReference type="SAM" id="MobiDB-lite"/>
    </source>
</evidence>
<reference key="1">
    <citation type="journal article" date="2006" name="Appl. Environ. Microbiol.">
        <title>Complete genome sequence of the marine, chemolithoautotrophic, ammonia-oxidizing bacterium Nitrosococcus oceani ATCC 19707.</title>
        <authorList>
            <person name="Klotz M.G."/>
            <person name="Arp D.J."/>
            <person name="Chain P.S.G."/>
            <person name="El-Sheikh A.F."/>
            <person name="Hauser L.J."/>
            <person name="Hommes N.G."/>
            <person name="Larimer F.W."/>
            <person name="Malfatti S.A."/>
            <person name="Norton J.M."/>
            <person name="Poret-Peterson A.T."/>
            <person name="Vergez L.M."/>
            <person name="Ward B.B."/>
        </authorList>
    </citation>
    <scope>NUCLEOTIDE SEQUENCE [LARGE SCALE GENOMIC DNA]</scope>
    <source>
        <strain>ATCC 19707 / BCRC 17464 / JCM 30415 / NCIMB 11848 / C-107</strain>
    </source>
</reference>
<protein>
    <recommendedName>
        <fullName evidence="1">Ferrochelatase</fullName>
        <ecNumber evidence="1">4.98.1.1</ecNumber>
    </recommendedName>
    <alternativeName>
        <fullName evidence="1">Heme synthase</fullName>
    </alternativeName>
    <alternativeName>
        <fullName evidence="1">Protoheme ferro-lyase</fullName>
    </alternativeName>
</protein>
<organism>
    <name type="scientific">Nitrosococcus oceani (strain ATCC 19707 / BCRC 17464 / JCM 30415 / NCIMB 11848 / C-107)</name>
    <dbReference type="NCBI Taxonomy" id="323261"/>
    <lineage>
        <taxon>Bacteria</taxon>
        <taxon>Pseudomonadati</taxon>
        <taxon>Pseudomonadota</taxon>
        <taxon>Gammaproteobacteria</taxon>
        <taxon>Chromatiales</taxon>
        <taxon>Chromatiaceae</taxon>
        <taxon>Nitrosococcus</taxon>
    </lineage>
</organism>
<name>HEMH_NITOC</name>
<feature type="chain" id="PRO_1000072025" description="Ferrochelatase">
    <location>
        <begin position="1"/>
        <end position="368"/>
    </location>
</feature>
<feature type="region of interest" description="Disordered" evidence="2">
    <location>
        <begin position="341"/>
        <end position="368"/>
    </location>
</feature>
<feature type="binding site" evidence="1">
    <location>
        <position position="209"/>
    </location>
    <ligand>
        <name>Fe cation</name>
        <dbReference type="ChEBI" id="CHEBI:24875"/>
    </ligand>
</feature>
<feature type="binding site" evidence="1">
    <location>
        <position position="290"/>
    </location>
    <ligand>
        <name>Fe cation</name>
        <dbReference type="ChEBI" id="CHEBI:24875"/>
    </ligand>
</feature>
<sequence length="368" mass="41581">MNFKGYSDYRHDTVARIGVLVASLGTPEAPTASAVRRFLASFLSDPRVVELPRPLWWLILHGIILRIRPSPVARLYQSIWREDGSPLLSFARRVGQSLQAELDSRGRSIEIRLGMRHGSPSIETALEELRQSGAQRLLVFPLYPQYSGSTTGSTFDAVAQVLSTWRWVPELRMIAQYHDHSGYLEALAETIRRSWKEAGRGERLLISFHGLPKRYLLAGDPYHCQCQKTARLLAERLGLKEGEWQIAFQSRFGREEWLKPYADHLLQAWAEAGIKRVDVVCPGFAVDCLETLEEMAQRNRELFLHAGGEEYRYIPALNDESAHIRALTDLVEQHIQGWSEADLGGGREATGQAAERSRQRALALGAKQ</sequence>